<organism>
    <name type="scientific">Cupriavidus necator (strain ATCC 17699 / DSM 428 / KCTC 22496 / NCIMB 10442 / H16 / Stanier 337)</name>
    <name type="common">Ralstonia eutropha</name>
    <dbReference type="NCBI Taxonomy" id="381666"/>
    <lineage>
        <taxon>Bacteria</taxon>
        <taxon>Pseudomonadati</taxon>
        <taxon>Pseudomonadota</taxon>
        <taxon>Betaproteobacteria</taxon>
        <taxon>Burkholderiales</taxon>
        <taxon>Burkholderiaceae</taxon>
        <taxon>Cupriavidus</taxon>
    </lineage>
</organism>
<protein>
    <recommendedName>
        <fullName evidence="1">Pantothenate synthetase</fullName>
        <shortName evidence="1">PS</shortName>
        <ecNumber evidence="1">6.3.2.1</ecNumber>
    </recommendedName>
    <alternativeName>
        <fullName evidence="1">Pantoate--beta-alanine ligase</fullName>
    </alternativeName>
    <alternativeName>
        <fullName evidence="1">Pantoate-activating enzyme</fullName>
    </alternativeName>
</protein>
<gene>
    <name evidence="1" type="primary">panC</name>
    <name type="ordered locus">H16_A2959</name>
</gene>
<feature type="chain" id="PRO_0000305522" description="Pantothenate synthetase">
    <location>
        <begin position="1"/>
        <end position="282"/>
    </location>
</feature>
<feature type="active site" description="Proton donor" evidence="1">
    <location>
        <position position="33"/>
    </location>
</feature>
<feature type="binding site" evidence="1">
    <location>
        <begin position="26"/>
        <end position="33"/>
    </location>
    <ligand>
        <name>ATP</name>
        <dbReference type="ChEBI" id="CHEBI:30616"/>
    </ligand>
</feature>
<feature type="binding site" evidence="1">
    <location>
        <position position="57"/>
    </location>
    <ligand>
        <name>(R)-pantoate</name>
        <dbReference type="ChEBI" id="CHEBI:15980"/>
    </ligand>
</feature>
<feature type="binding site" evidence="1">
    <location>
        <position position="57"/>
    </location>
    <ligand>
        <name>beta-alanine</name>
        <dbReference type="ChEBI" id="CHEBI:57966"/>
    </ligand>
</feature>
<feature type="binding site" evidence="1">
    <location>
        <begin position="144"/>
        <end position="147"/>
    </location>
    <ligand>
        <name>ATP</name>
        <dbReference type="ChEBI" id="CHEBI:30616"/>
    </ligand>
</feature>
<feature type="binding site" evidence="1">
    <location>
        <position position="150"/>
    </location>
    <ligand>
        <name>(R)-pantoate</name>
        <dbReference type="ChEBI" id="CHEBI:15980"/>
    </ligand>
</feature>
<feature type="binding site" evidence="1">
    <location>
        <position position="173"/>
    </location>
    <ligand>
        <name>ATP</name>
        <dbReference type="ChEBI" id="CHEBI:30616"/>
    </ligand>
</feature>
<feature type="binding site" evidence="1">
    <location>
        <begin position="181"/>
        <end position="184"/>
    </location>
    <ligand>
        <name>ATP</name>
        <dbReference type="ChEBI" id="CHEBI:30616"/>
    </ligand>
</feature>
<evidence type="ECO:0000255" key="1">
    <source>
        <dbReference type="HAMAP-Rule" id="MF_00158"/>
    </source>
</evidence>
<reference key="1">
    <citation type="journal article" date="2006" name="Nat. Biotechnol.">
        <title>Genome sequence of the bioplastic-producing 'Knallgas' bacterium Ralstonia eutropha H16.</title>
        <authorList>
            <person name="Pohlmann A."/>
            <person name="Fricke W.F."/>
            <person name="Reinecke F."/>
            <person name="Kusian B."/>
            <person name="Liesegang H."/>
            <person name="Cramm R."/>
            <person name="Eitinger T."/>
            <person name="Ewering C."/>
            <person name="Poetter M."/>
            <person name="Schwartz E."/>
            <person name="Strittmatter A."/>
            <person name="Voss I."/>
            <person name="Gottschalk G."/>
            <person name="Steinbuechel A."/>
            <person name="Friedrich B."/>
            <person name="Bowien B."/>
        </authorList>
    </citation>
    <scope>NUCLEOTIDE SEQUENCE [LARGE SCALE GENOMIC DNA]</scope>
    <source>
        <strain>ATCC 17699 / DSM 428 / KCTC 22496 / NCIMB 10442 / H16 / Stanier 337</strain>
    </source>
</reference>
<dbReference type="EC" id="6.3.2.1" evidence="1"/>
<dbReference type="EMBL" id="AM260479">
    <property type="protein sequence ID" value="CAJ94035.1"/>
    <property type="molecule type" value="Genomic_DNA"/>
</dbReference>
<dbReference type="RefSeq" id="WP_010814906.1">
    <property type="nucleotide sequence ID" value="NZ_CP039287.1"/>
</dbReference>
<dbReference type="SMR" id="Q0K7I6"/>
<dbReference type="STRING" id="381666.H16_A2959"/>
<dbReference type="KEGG" id="reh:H16_A2959"/>
<dbReference type="eggNOG" id="COG0414">
    <property type="taxonomic scope" value="Bacteria"/>
</dbReference>
<dbReference type="HOGENOM" id="CLU_047148_0_0_4"/>
<dbReference type="OrthoDB" id="9773087at2"/>
<dbReference type="UniPathway" id="UPA00028">
    <property type="reaction ID" value="UER00005"/>
</dbReference>
<dbReference type="Proteomes" id="UP000008210">
    <property type="component" value="Chromosome 1"/>
</dbReference>
<dbReference type="GO" id="GO:0005829">
    <property type="term" value="C:cytosol"/>
    <property type="evidence" value="ECO:0007669"/>
    <property type="project" value="TreeGrafter"/>
</dbReference>
<dbReference type="GO" id="GO:0005524">
    <property type="term" value="F:ATP binding"/>
    <property type="evidence" value="ECO:0007669"/>
    <property type="project" value="UniProtKB-KW"/>
</dbReference>
<dbReference type="GO" id="GO:0004592">
    <property type="term" value="F:pantoate-beta-alanine ligase activity"/>
    <property type="evidence" value="ECO:0007669"/>
    <property type="project" value="UniProtKB-UniRule"/>
</dbReference>
<dbReference type="GO" id="GO:0015940">
    <property type="term" value="P:pantothenate biosynthetic process"/>
    <property type="evidence" value="ECO:0007669"/>
    <property type="project" value="UniProtKB-UniRule"/>
</dbReference>
<dbReference type="CDD" id="cd00560">
    <property type="entry name" value="PanC"/>
    <property type="match status" value="1"/>
</dbReference>
<dbReference type="Gene3D" id="3.40.50.620">
    <property type="entry name" value="HUPs"/>
    <property type="match status" value="1"/>
</dbReference>
<dbReference type="Gene3D" id="3.30.1300.10">
    <property type="entry name" value="Pantoate-beta-alanine ligase, C-terminal domain"/>
    <property type="match status" value="1"/>
</dbReference>
<dbReference type="HAMAP" id="MF_00158">
    <property type="entry name" value="PanC"/>
    <property type="match status" value="1"/>
</dbReference>
<dbReference type="InterPro" id="IPR004821">
    <property type="entry name" value="Cyt_trans-like"/>
</dbReference>
<dbReference type="InterPro" id="IPR003721">
    <property type="entry name" value="Pantoate_ligase"/>
</dbReference>
<dbReference type="InterPro" id="IPR042176">
    <property type="entry name" value="Pantoate_ligase_C"/>
</dbReference>
<dbReference type="InterPro" id="IPR014729">
    <property type="entry name" value="Rossmann-like_a/b/a_fold"/>
</dbReference>
<dbReference type="NCBIfam" id="TIGR00125">
    <property type="entry name" value="cyt_tran_rel"/>
    <property type="match status" value="1"/>
</dbReference>
<dbReference type="NCBIfam" id="TIGR00018">
    <property type="entry name" value="panC"/>
    <property type="match status" value="1"/>
</dbReference>
<dbReference type="PANTHER" id="PTHR21299">
    <property type="entry name" value="CYTIDYLATE KINASE/PANTOATE-BETA-ALANINE LIGASE"/>
    <property type="match status" value="1"/>
</dbReference>
<dbReference type="PANTHER" id="PTHR21299:SF1">
    <property type="entry name" value="PANTOATE--BETA-ALANINE LIGASE"/>
    <property type="match status" value="1"/>
</dbReference>
<dbReference type="Pfam" id="PF02569">
    <property type="entry name" value="Pantoate_ligase"/>
    <property type="match status" value="1"/>
</dbReference>
<dbReference type="SUPFAM" id="SSF52374">
    <property type="entry name" value="Nucleotidylyl transferase"/>
    <property type="match status" value="1"/>
</dbReference>
<sequence>MKVISSIQELRDQLRGQNRAAFVPTMGNLHEGHLSLMRLARQHGDPVVASIFVNRLQFGPNEDFDKYPRTLQDDIEKLQKEGVYVLFAPSERDMYPEPQEYRVEPPHDLGDILEGEFRPGFFKGVCTVVMKLFSCAQPRVAVFGKKDYQQLMIVRRMVQQFALPIDIIPAETIRAEDGLALSSRNRYLSPDERAEAPVLYRTLHDVRDTVLGSDRASADLLAVEANAKESLARRGWKPDYVSIRKRVDLQAPTREEFLAGEPLVILTAAKLGATRLIDNLEI</sequence>
<proteinExistence type="inferred from homology"/>
<name>PANC_CUPNH</name>
<keyword id="KW-0067">ATP-binding</keyword>
<keyword id="KW-0963">Cytoplasm</keyword>
<keyword id="KW-0436">Ligase</keyword>
<keyword id="KW-0547">Nucleotide-binding</keyword>
<keyword id="KW-0566">Pantothenate biosynthesis</keyword>
<keyword id="KW-1185">Reference proteome</keyword>
<accession>Q0K7I6</accession>
<comment type="function">
    <text evidence="1">Catalyzes the condensation of pantoate with beta-alanine in an ATP-dependent reaction via a pantoyl-adenylate intermediate.</text>
</comment>
<comment type="catalytic activity">
    <reaction evidence="1">
        <text>(R)-pantoate + beta-alanine + ATP = (R)-pantothenate + AMP + diphosphate + H(+)</text>
        <dbReference type="Rhea" id="RHEA:10912"/>
        <dbReference type="ChEBI" id="CHEBI:15378"/>
        <dbReference type="ChEBI" id="CHEBI:15980"/>
        <dbReference type="ChEBI" id="CHEBI:29032"/>
        <dbReference type="ChEBI" id="CHEBI:30616"/>
        <dbReference type="ChEBI" id="CHEBI:33019"/>
        <dbReference type="ChEBI" id="CHEBI:57966"/>
        <dbReference type="ChEBI" id="CHEBI:456215"/>
        <dbReference type="EC" id="6.3.2.1"/>
    </reaction>
</comment>
<comment type="pathway">
    <text evidence="1">Cofactor biosynthesis; (R)-pantothenate biosynthesis; (R)-pantothenate from (R)-pantoate and beta-alanine: step 1/1.</text>
</comment>
<comment type="subunit">
    <text evidence="1">Homodimer.</text>
</comment>
<comment type="subcellular location">
    <subcellularLocation>
        <location evidence="1">Cytoplasm</location>
    </subcellularLocation>
</comment>
<comment type="miscellaneous">
    <text evidence="1">The reaction proceeds by a bi uni uni bi ping pong mechanism.</text>
</comment>
<comment type="similarity">
    <text evidence="1">Belongs to the pantothenate synthetase family.</text>
</comment>